<feature type="chain" id="PRO_1000186928" description="Allantoinase">
    <location>
        <begin position="1"/>
        <end position="453"/>
    </location>
</feature>
<feature type="binding site" evidence="1">
    <location>
        <position position="59"/>
    </location>
    <ligand>
        <name>Zn(2+)</name>
        <dbReference type="ChEBI" id="CHEBI:29105"/>
        <label>1</label>
    </ligand>
</feature>
<feature type="binding site" evidence="1">
    <location>
        <position position="61"/>
    </location>
    <ligand>
        <name>Zn(2+)</name>
        <dbReference type="ChEBI" id="CHEBI:29105"/>
        <label>1</label>
    </ligand>
</feature>
<feature type="binding site" description="via carbamate group" evidence="1">
    <location>
        <position position="146"/>
    </location>
    <ligand>
        <name>Zn(2+)</name>
        <dbReference type="ChEBI" id="CHEBI:29105"/>
        <label>1</label>
    </ligand>
</feature>
<feature type="binding site" description="via carbamate group" evidence="1">
    <location>
        <position position="146"/>
    </location>
    <ligand>
        <name>Zn(2+)</name>
        <dbReference type="ChEBI" id="CHEBI:29105"/>
        <label>2</label>
    </ligand>
</feature>
<feature type="binding site" evidence="1">
    <location>
        <position position="186"/>
    </location>
    <ligand>
        <name>Zn(2+)</name>
        <dbReference type="ChEBI" id="CHEBI:29105"/>
        <label>2</label>
    </ligand>
</feature>
<feature type="binding site" evidence="1">
    <location>
        <position position="242"/>
    </location>
    <ligand>
        <name>Zn(2+)</name>
        <dbReference type="ChEBI" id="CHEBI:29105"/>
        <label>2</label>
    </ligand>
</feature>
<feature type="binding site" evidence="1">
    <location>
        <position position="315"/>
    </location>
    <ligand>
        <name>Zn(2+)</name>
        <dbReference type="ChEBI" id="CHEBI:29105"/>
        <label>1</label>
    </ligand>
</feature>
<feature type="modified residue" description="N6-carboxylysine" evidence="1">
    <location>
        <position position="146"/>
    </location>
</feature>
<organism>
    <name type="scientific">Salmonella enteritidis PT4 (strain P125109)</name>
    <dbReference type="NCBI Taxonomy" id="550537"/>
    <lineage>
        <taxon>Bacteria</taxon>
        <taxon>Pseudomonadati</taxon>
        <taxon>Pseudomonadota</taxon>
        <taxon>Gammaproteobacteria</taxon>
        <taxon>Enterobacterales</taxon>
        <taxon>Enterobacteriaceae</taxon>
        <taxon>Salmonella</taxon>
    </lineage>
</organism>
<proteinExistence type="inferred from homology"/>
<accession>B5QUT6</accession>
<protein>
    <recommendedName>
        <fullName evidence="1">Allantoinase</fullName>
        <ecNumber evidence="1">3.5.2.5</ecNumber>
    </recommendedName>
    <alternativeName>
        <fullName evidence="1">Allantoin-utilizing enzyme</fullName>
    </alternativeName>
</protein>
<gene>
    <name evidence="1" type="primary">allB</name>
    <name type="ordered locus">SEN0504</name>
</gene>
<comment type="function">
    <text evidence="1">Catalyzes the conversion of allantoin (5-ureidohydantoin) to allantoic acid by hydrolytic cleavage of the five-member hydantoin ring.</text>
</comment>
<comment type="catalytic activity">
    <reaction evidence="1">
        <text>(S)-allantoin + H2O = allantoate + H(+)</text>
        <dbReference type="Rhea" id="RHEA:17029"/>
        <dbReference type="ChEBI" id="CHEBI:15377"/>
        <dbReference type="ChEBI" id="CHEBI:15378"/>
        <dbReference type="ChEBI" id="CHEBI:15678"/>
        <dbReference type="ChEBI" id="CHEBI:17536"/>
        <dbReference type="EC" id="3.5.2.5"/>
    </reaction>
</comment>
<comment type="cofactor">
    <cofactor evidence="1">
        <name>Zn(2+)</name>
        <dbReference type="ChEBI" id="CHEBI:29105"/>
    </cofactor>
    <text evidence="1">Binds 2 Zn(2+) ions per subunit.</text>
</comment>
<comment type="pathway">
    <text evidence="1">Nitrogen metabolism; (S)-allantoin degradation; allantoate from (S)-allantoin: step 1/1.</text>
</comment>
<comment type="subunit">
    <text evidence="1">Homotetramer.</text>
</comment>
<comment type="PTM">
    <text evidence="1">Carboxylation allows a single lysine to coordinate two zinc ions.</text>
</comment>
<comment type="similarity">
    <text evidence="1">Belongs to the metallo-dependent hydrolases superfamily. Allantoinase family.</text>
</comment>
<name>ALLB_SALEP</name>
<dbReference type="EC" id="3.5.2.5" evidence="1"/>
<dbReference type="EMBL" id="AM933172">
    <property type="protein sequence ID" value="CAR32089.1"/>
    <property type="molecule type" value="Genomic_DNA"/>
</dbReference>
<dbReference type="RefSeq" id="WP_000006865.1">
    <property type="nucleotide sequence ID" value="NC_011294.1"/>
</dbReference>
<dbReference type="SMR" id="B5QUT6"/>
<dbReference type="KEGG" id="set:SEN0504"/>
<dbReference type="HOGENOM" id="CLU_015572_4_2_6"/>
<dbReference type="UniPathway" id="UPA00395">
    <property type="reaction ID" value="UER00653"/>
</dbReference>
<dbReference type="Proteomes" id="UP000000613">
    <property type="component" value="Chromosome"/>
</dbReference>
<dbReference type="GO" id="GO:0005737">
    <property type="term" value="C:cytoplasm"/>
    <property type="evidence" value="ECO:0007669"/>
    <property type="project" value="TreeGrafter"/>
</dbReference>
<dbReference type="GO" id="GO:0004038">
    <property type="term" value="F:allantoinase activity"/>
    <property type="evidence" value="ECO:0007669"/>
    <property type="project" value="UniProtKB-UniRule"/>
</dbReference>
<dbReference type="GO" id="GO:0050897">
    <property type="term" value="F:cobalt ion binding"/>
    <property type="evidence" value="ECO:0007669"/>
    <property type="project" value="InterPro"/>
</dbReference>
<dbReference type="GO" id="GO:0008270">
    <property type="term" value="F:zinc ion binding"/>
    <property type="evidence" value="ECO:0007669"/>
    <property type="project" value="InterPro"/>
</dbReference>
<dbReference type="GO" id="GO:0000256">
    <property type="term" value="P:allantoin catabolic process"/>
    <property type="evidence" value="ECO:0007669"/>
    <property type="project" value="UniProtKB-UniRule"/>
</dbReference>
<dbReference type="GO" id="GO:0006145">
    <property type="term" value="P:purine nucleobase catabolic process"/>
    <property type="evidence" value="ECO:0007669"/>
    <property type="project" value="TreeGrafter"/>
</dbReference>
<dbReference type="CDD" id="cd01315">
    <property type="entry name" value="L-HYD_ALN"/>
    <property type="match status" value="1"/>
</dbReference>
<dbReference type="FunFam" id="3.20.20.140:FF:000013">
    <property type="entry name" value="Allantoinase"/>
    <property type="match status" value="1"/>
</dbReference>
<dbReference type="Gene3D" id="3.20.20.140">
    <property type="entry name" value="Metal-dependent hydrolases"/>
    <property type="match status" value="1"/>
</dbReference>
<dbReference type="HAMAP" id="MF_01645">
    <property type="entry name" value="Hydantoinase"/>
    <property type="match status" value="1"/>
</dbReference>
<dbReference type="InterPro" id="IPR017593">
    <property type="entry name" value="Allantoinase"/>
</dbReference>
<dbReference type="InterPro" id="IPR047604">
    <property type="entry name" value="Allantoinase_bact"/>
</dbReference>
<dbReference type="InterPro" id="IPR006680">
    <property type="entry name" value="Amidohydro-rel"/>
</dbReference>
<dbReference type="InterPro" id="IPR050138">
    <property type="entry name" value="DHOase/Allantoinase_Hydrolase"/>
</dbReference>
<dbReference type="InterPro" id="IPR011059">
    <property type="entry name" value="Metal-dep_hydrolase_composite"/>
</dbReference>
<dbReference type="InterPro" id="IPR032466">
    <property type="entry name" value="Metal_Hydrolase"/>
</dbReference>
<dbReference type="NCBIfam" id="TIGR03178">
    <property type="entry name" value="allantoinase"/>
    <property type="match status" value="1"/>
</dbReference>
<dbReference type="NCBIfam" id="NF005960">
    <property type="entry name" value="PRK08044.1"/>
    <property type="match status" value="1"/>
</dbReference>
<dbReference type="PANTHER" id="PTHR43668">
    <property type="entry name" value="ALLANTOINASE"/>
    <property type="match status" value="1"/>
</dbReference>
<dbReference type="PANTHER" id="PTHR43668:SF4">
    <property type="entry name" value="ALLANTOINASE"/>
    <property type="match status" value="1"/>
</dbReference>
<dbReference type="Pfam" id="PF01979">
    <property type="entry name" value="Amidohydro_1"/>
    <property type="match status" value="1"/>
</dbReference>
<dbReference type="SUPFAM" id="SSF51338">
    <property type="entry name" value="Composite domain of metallo-dependent hydrolases"/>
    <property type="match status" value="1"/>
</dbReference>
<dbReference type="SUPFAM" id="SSF51556">
    <property type="entry name" value="Metallo-dependent hydrolases"/>
    <property type="match status" value="1"/>
</dbReference>
<sequence>MSFDLIIKNGTVILENEARVIDIAVQGGKIAAIGENLGEAKNVLDATGLIVSPGMVDAHTHISEPGRTHWEGYETGTRAAAKGGITTMIEMPLNQLPATVDRETIELKFDAAKGKLTIDAAQLGGLVSYNLDRLHELDEVGVVGFKCFVATCGDRGIDNDFRDVNDWQFYKGAQKLGEMDQTVLVHCENALICDELGEEAKREGRVTAHDYVASRPVFTEVEAIRRVLYLAKAAGCRLHVCHISSPEGVEEVTRARQEGQDVTCESCPHYFVLDTDQFEEIGTLAKCSPPIRDQENQKGMWEKLFNGEIDCLVSDHSPCPPEMKAGNIMQAWGGIAGLQNCMDVMFDEAVQKRGMSLPMFGKLMATNAADIFGLKHKGRIAPGKDADLVFIQPDSSYVLKNEDLEYRHKVSPYVGRTIGARITKTILRGDVIYDIEHGFPVPPKGQFILKHQQ</sequence>
<reference key="1">
    <citation type="journal article" date="2008" name="Genome Res.">
        <title>Comparative genome analysis of Salmonella enteritidis PT4 and Salmonella gallinarum 287/91 provides insights into evolutionary and host adaptation pathways.</title>
        <authorList>
            <person name="Thomson N.R."/>
            <person name="Clayton D.J."/>
            <person name="Windhorst D."/>
            <person name="Vernikos G."/>
            <person name="Davidson S."/>
            <person name="Churcher C."/>
            <person name="Quail M.A."/>
            <person name="Stevens M."/>
            <person name="Jones M.A."/>
            <person name="Watson M."/>
            <person name="Barron A."/>
            <person name="Layton A."/>
            <person name="Pickard D."/>
            <person name="Kingsley R.A."/>
            <person name="Bignell A."/>
            <person name="Clark L."/>
            <person name="Harris B."/>
            <person name="Ormond D."/>
            <person name="Abdellah Z."/>
            <person name="Brooks K."/>
            <person name="Cherevach I."/>
            <person name="Chillingworth T."/>
            <person name="Woodward J."/>
            <person name="Norberczak H."/>
            <person name="Lord A."/>
            <person name="Arrowsmith C."/>
            <person name="Jagels K."/>
            <person name="Moule S."/>
            <person name="Mungall K."/>
            <person name="Saunders M."/>
            <person name="Whitehead S."/>
            <person name="Chabalgoity J.A."/>
            <person name="Maskell D."/>
            <person name="Humphreys T."/>
            <person name="Roberts M."/>
            <person name="Barrow P.A."/>
            <person name="Dougan G."/>
            <person name="Parkhill J."/>
        </authorList>
    </citation>
    <scope>NUCLEOTIDE SEQUENCE [LARGE SCALE GENOMIC DNA]</scope>
    <source>
        <strain>P125109</strain>
    </source>
</reference>
<keyword id="KW-0378">Hydrolase</keyword>
<keyword id="KW-0479">Metal-binding</keyword>
<keyword id="KW-0659">Purine metabolism</keyword>
<keyword id="KW-0862">Zinc</keyword>
<evidence type="ECO:0000255" key="1">
    <source>
        <dbReference type="HAMAP-Rule" id="MF_01645"/>
    </source>
</evidence>